<accession>Q5FG30</accession>
<keyword id="KW-0028">Amino-acid biosynthesis</keyword>
<keyword id="KW-0963">Cytoplasm</keyword>
<keyword id="KW-0554">One-carbon metabolism</keyword>
<keyword id="KW-0663">Pyridoxal phosphate</keyword>
<keyword id="KW-0808">Transferase</keyword>
<comment type="function">
    <text evidence="1">Catalyzes the reversible interconversion of serine and glycine with tetrahydrofolate (THF) serving as the one-carbon carrier. This reaction serves as the major source of one-carbon groups required for the biosynthesis of purines, thymidylate, methionine, and other important biomolecules. Also exhibits THF-independent aldolase activity toward beta-hydroxyamino acids, producing glycine and aldehydes, via a retro-aldol mechanism.</text>
</comment>
<comment type="catalytic activity">
    <reaction evidence="1">
        <text>(6R)-5,10-methylene-5,6,7,8-tetrahydrofolate + glycine + H2O = (6S)-5,6,7,8-tetrahydrofolate + L-serine</text>
        <dbReference type="Rhea" id="RHEA:15481"/>
        <dbReference type="ChEBI" id="CHEBI:15377"/>
        <dbReference type="ChEBI" id="CHEBI:15636"/>
        <dbReference type="ChEBI" id="CHEBI:33384"/>
        <dbReference type="ChEBI" id="CHEBI:57305"/>
        <dbReference type="ChEBI" id="CHEBI:57453"/>
        <dbReference type="EC" id="2.1.2.1"/>
    </reaction>
</comment>
<comment type="cofactor">
    <cofactor evidence="1">
        <name>pyridoxal 5'-phosphate</name>
        <dbReference type="ChEBI" id="CHEBI:597326"/>
    </cofactor>
</comment>
<comment type="pathway">
    <text evidence="1">One-carbon metabolism; tetrahydrofolate interconversion.</text>
</comment>
<comment type="pathway">
    <text evidence="1">Amino-acid biosynthesis; glycine biosynthesis; glycine from L-serine: step 1/1.</text>
</comment>
<comment type="subunit">
    <text evidence="1">Homodimer.</text>
</comment>
<comment type="subcellular location">
    <subcellularLocation>
        <location evidence="1">Cytoplasm</location>
    </subcellularLocation>
</comment>
<comment type="similarity">
    <text evidence="1">Belongs to the SHMT family.</text>
</comment>
<evidence type="ECO:0000255" key="1">
    <source>
        <dbReference type="HAMAP-Rule" id="MF_00051"/>
    </source>
</evidence>
<name>GLYA_EHRRG</name>
<gene>
    <name evidence="1" type="primary">glyA</name>
    <name type="ordered locus">ERGA_CDS_07110</name>
</gene>
<feature type="chain" id="PRO_0000234977" description="Serine hydroxymethyltransferase">
    <location>
        <begin position="1"/>
        <end position="421"/>
    </location>
</feature>
<feature type="binding site" evidence="1">
    <location>
        <position position="123"/>
    </location>
    <ligand>
        <name>(6S)-5,6,7,8-tetrahydrofolate</name>
        <dbReference type="ChEBI" id="CHEBI:57453"/>
    </ligand>
</feature>
<feature type="binding site" evidence="1">
    <location>
        <begin position="127"/>
        <end position="129"/>
    </location>
    <ligand>
        <name>(6S)-5,6,7,8-tetrahydrofolate</name>
        <dbReference type="ChEBI" id="CHEBI:57453"/>
    </ligand>
</feature>
<feature type="site" description="Plays an important role in substrate specificity" evidence="1">
    <location>
        <position position="231"/>
    </location>
</feature>
<feature type="modified residue" description="N6-(pyridoxal phosphate)lysine" evidence="1">
    <location>
        <position position="232"/>
    </location>
</feature>
<proteinExistence type="inferred from homology"/>
<protein>
    <recommendedName>
        <fullName evidence="1">Serine hydroxymethyltransferase</fullName>
        <shortName evidence="1">SHMT</shortName>
        <shortName evidence="1">Serine methylase</shortName>
        <ecNumber evidence="1">2.1.2.1</ecNumber>
    </recommendedName>
</protein>
<organism>
    <name type="scientific">Ehrlichia ruminantium (strain Gardel)</name>
    <dbReference type="NCBI Taxonomy" id="302409"/>
    <lineage>
        <taxon>Bacteria</taxon>
        <taxon>Pseudomonadati</taxon>
        <taxon>Pseudomonadota</taxon>
        <taxon>Alphaproteobacteria</taxon>
        <taxon>Rickettsiales</taxon>
        <taxon>Anaplasmataceae</taxon>
        <taxon>Ehrlichia</taxon>
    </lineage>
</organism>
<dbReference type="EC" id="2.1.2.1" evidence="1"/>
<dbReference type="EMBL" id="CR925677">
    <property type="protein sequence ID" value="CAI28163.1"/>
    <property type="molecule type" value="Genomic_DNA"/>
</dbReference>
<dbReference type="RefSeq" id="WP_011155363.1">
    <property type="nucleotide sequence ID" value="NC_006831.1"/>
</dbReference>
<dbReference type="SMR" id="Q5FG30"/>
<dbReference type="GeneID" id="33058115"/>
<dbReference type="KEGG" id="erg:ERGA_CDS_07110"/>
<dbReference type="HOGENOM" id="CLU_022477_2_1_5"/>
<dbReference type="OrthoDB" id="9803846at2"/>
<dbReference type="UniPathway" id="UPA00193"/>
<dbReference type="UniPathway" id="UPA00288">
    <property type="reaction ID" value="UER01023"/>
</dbReference>
<dbReference type="Proteomes" id="UP000000533">
    <property type="component" value="Chromosome"/>
</dbReference>
<dbReference type="GO" id="GO:0005829">
    <property type="term" value="C:cytosol"/>
    <property type="evidence" value="ECO:0007669"/>
    <property type="project" value="TreeGrafter"/>
</dbReference>
<dbReference type="GO" id="GO:0004372">
    <property type="term" value="F:glycine hydroxymethyltransferase activity"/>
    <property type="evidence" value="ECO:0007669"/>
    <property type="project" value="UniProtKB-UniRule"/>
</dbReference>
<dbReference type="GO" id="GO:0030170">
    <property type="term" value="F:pyridoxal phosphate binding"/>
    <property type="evidence" value="ECO:0007669"/>
    <property type="project" value="UniProtKB-UniRule"/>
</dbReference>
<dbReference type="GO" id="GO:0019264">
    <property type="term" value="P:glycine biosynthetic process from serine"/>
    <property type="evidence" value="ECO:0007669"/>
    <property type="project" value="UniProtKB-UniRule"/>
</dbReference>
<dbReference type="GO" id="GO:0035999">
    <property type="term" value="P:tetrahydrofolate interconversion"/>
    <property type="evidence" value="ECO:0007669"/>
    <property type="project" value="UniProtKB-UniRule"/>
</dbReference>
<dbReference type="CDD" id="cd00378">
    <property type="entry name" value="SHMT"/>
    <property type="match status" value="1"/>
</dbReference>
<dbReference type="FunFam" id="3.40.640.10:FF:000001">
    <property type="entry name" value="Serine hydroxymethyltransferase"/>
    <property type="match status" value="1"/>
</dbReference>
<dbReference type="Gene3D" id="3.90.1150.10">
    <property type="entry name" value="Aspartate Aminotransferase, domain 1"/>
    <property type="match status" value="1"/>
</dbReference>
<dbReference type="Gene3D" id="3.40.640.10">
    <property type="entry name" value="Type I PLP-dependent aspartate aminotransferase-like (Major domain)"/>
    <property type="match status" value="1"/>
</dbReference>
<dbReference type="HAMAP" id="MF_00051">
    <property type="entry name" value="SHMT"/>
    <property type="match status" value="1"/>
</dbReference>
<dbReference type="InterPro" id="IPR015424">
    <property type="entry name" value="PyrdxlP-dep_Trfase"/>
</dbReference>
<dbReference type="InterPro" id="IPR015421">
    <property type="entry name" value="PyrdxlP-dep_Trfase_major"/>
</dbReference>
<dbReference type="InterPro" id="IPR015422">
    <property type="entry name" value="PyrdxlP-dep_Trfase_small"/>
</dbReference>
<dbReference type="InterPro" id="IPR001085">
    <property type="entry name" value="Ser_HO-MeTrfase"/>
</dbReference>
<dbReference type="InterPro" id="IPR049943">
    <property type="entry name" value="Ser_HO-MeTrfase-like"/>
</dbReference>
<dbReference type="InterPro" id="IPR019798">
    <property type="entry name" value="Ser_HO-MeTrfase_PLP_BS"/>
</dbReference>
<dbReference type="InterPro" id="IPR039429">
    <property type="entry name" value="SHMT-like_dom"/>
</dbReference>
<dbReference type="NCBIfam" id="NF000586">
    <property type="entry name" value="PRK00011.1"/>
    <property type="match status" value="1"/>
</dbReference>
<dbReference type="PANTHER" id="PTHR11680">
    <property type="entry name" value="SERINE HYDROXYMETHYLTRANSFERASE"/>
    <property type="match status" value="1"/>
</dbReference>
<dbReference type="PANTHER" id="PTHR11680:SF35">
    <property type="entry name" value="SERINE HYDROXYMETHYLTRANSFERASE 1"/>
    <property type="match status" value="1"/>
</dbReference>
<dbReference type="Pfam" id="PF00464">
    <property type="entry name" value="SHMT"/>
    <property type="match status" value="1"/>
</dbReference>
<dbReference type="PIRSF" id="PIRSF000412">
    <property type="entry name" value="SHMT"/>
    <property type="match status" value="1"/>
</dbReference>
<dbReference type="SUPFAM" id="SSF53383">
    <property type="entry name" value="PLP-dependent transferases"/>
    <property type="match status" value="1"/>
</dbReference>
<dbReference type="PROSITE" id="PS00096">
    <property type="entry name" value="SHMT"/>
    <property type="match status" value="1"/>
</dbReference>
<reference key="1">
    <citation type="journal article" date="2006" name="J. Bacteriol.">
        <title>Comparative genomic analysis of three strains of Ehrlichia ruminantium reveals an active process of genome size plasticity.</title>
        <authorList>
            <person name="Frutos R."/>
            <person name="Viari A."/>
            <person name="Ferraz C."/>
            <person name="Morgat A."/>
            <person name="Eychenie S."/>
            <person name="Kandassamy Y."/>
            <person name="Chantal I."/>
            <person name="Bensaid A."/>
            <person name="Coissac E."/>
            <person name="Vachiery N."/>
            <person name="Demaille J."/>
            <person name="Martinez D."/>
        </authorList>
    </citation>
    <scope>NUCLEOTIDE SEQUENCE [LARGE SCALE GENOMIC DNA]</scope>
    <source>
        <strain>Gardel</strain>
    </source>
</reference>
<sequence>MVRYISDYDLQDVDTEVFKCITDESNRQNSQLQLIASENFVSKAVLQAQGSIFTNKYAEGYPGKRYYCGCHFADIIENIAIERLCKLFGCKFANVQPHSGSQANQGVFAALLKPGDTVIGMSLDCGGHLTHGSAPSISGKWFNAVQYQVDRDTGMIDMDAIEKLALSHNPSLIIAGSSSYPRTIDFKRFREIADKVGAYLLADIAHYAGLVAAGEFPSPIEYAHVITSTTHKTLRGPRGAVIMTNHEDIYKKIQSSIFPGMQGGPLMHVIAARAVAFGEALKPEFKDYAKQIIKNSKTLVKVFQERGLNVVTGGTDSHMVVVDLRPKSVTGKDAVLALERLGIICNKNAIPFDPEKPFVTSGLRFGSAAETSRGLQEPEFEKIGHMVCDVIDSLKTTDDVRLSIEQDVIRRVKELTDTFKV</sequence>